<evidence type="ECO:0000255" key="1">
    <source>
        <dbReference type="HAMAP-Rule" id="MF_00300"/>
    </source>
</evidence>
<evidence type="ECO:0000305" key="2"/>
<organism>
    <name type="scientific">Cupriavidus necator (strain ATCC 17699 / DSM 428 / KCTC 22496 / NCIMB 10442 / H16 / Stanier 337)</name>
    <name type="common">Ralstonia eutropha</name>
    <dbReference type="NCBI Taxonomy" id="381666"/>
    <lineage>
        <taxon>Bacteria</taxon>
        <taxon>Pseudomonadati</taxon>
        <taxon>Pseudomonadota</taxon>
        <taxon>Betaproteobacteria</taxon>
        <taxon>Burkholderiales</taxon>
        <taxon>Burkholderiaceae</taxon>
        <taxon>Cupriavidus</taxon>
    </lineage>
</organism>
<comment type="function">
    <text evidence="1">Catalyzes the anti-1,4-elimination of the C-3 phosphate and the C-6 proR hydrogen from 5-enolpyruvylshikimate-3-phosphate (EPSP) to yield chorismate, which is the branch point compound that serves as the starting substrate for the three terminal pathways of aromatic amino acid biosynthesis. This reaction introduces a second double bond into the aromatic ring system.</text>
</comment>
<comment type="catalytic activity">
    <reaction evidence="1">
        <text>5-O-(1-carboxyvinyl)-3-phosphoshikimate = chorismate + phosphate</text>
        <dbReference type="Rhea" id="RHEA:21020"/>
        <dbReference type="ChEBI" id="CHEBI:29748"/>
        <dbReference type="ChEBI" id="CHEBI:43474"/>
        <dbReference type="ChEBI" id="CHEBI:57701"/>
        <dbReference type="EC" id="4.2.3.5"/>
    </reaction>
</comment>
<comment type="cofactor">
    <cofactor evidence="1">
        <name>FMNH2</name>
        <dbReference type="ChEBI" id="CHEBI:57618"/>
    </cofactor>
    <text evidence="1">Reduced FMN (FMNH(2)).</text>
</comment>
<comment type="pathway">
    <text evidence="1">Metabolic intermediate biosynthesis; chorismate biosynthesis; chorismate from D-erythrose 4-phosphate and phosphoenolpyruvate: step 7/7.</text>
</comment>
<comment type="subunit">
    <text evidence="1">Homotetramer.</text>
</comment>
<comment type="similarity">
    <text evidence="1">Belongs to the chorismate synthase family.</text>
</comment>
<comment type="sequence caution" evidence="2">
    <conflict type="erroneous initiation">
        <sequence resource="EMBL-CDS" id="CAJ92457"/>
    </conflict>
    <text>Extended N-terminus.</text>
</comment>
<reference key="1">
    <citation type="journal article" date="2006" name="Nat. Biotechnol.">
        <title>Genome sequence of the bioplastic-producing 'Knallgas' bacterium Ralstonia eutropha H16.</title>
        <authorList>
            <person name="Pohlmann A."/>
            <person name="Fricke W.F."/>
            <person name="Reinecke F."/>
            <person name="Kusian B."/>
            <person name="Liesegang H."/>
            <person name="Cramm R."/>
            <person name="Eitinger T."/>
            <person name="Ewering C."/>
            <person name="Poetter M."/>
            <person name="Schwartz E."/>
            <person name="Strittmatter A."/>
            <person name="Voss I."/>
            <person name="Gottschalk G."/>
            <person name="Steinbuechel A."/>
            <person name="Friedrich B."/>
            <person name="Bowien B."/>
        </authorList>
    </citation>
    <scope>NUCLEOTIDE SEQUENCE [LARGE SCALE GENOMIC DNA]</scope>
    <source>
        <strain>ATCC 17699 / DSM 428 / KCTC 22496 / NCIMB 10442 / H16 / Stanier 337</strain>
    </source>
</reference>
<feature type="chain" id="PRO_0000322420" description="Chorismate synthase">
    <location>
        <begin position="1"/>
        <end position="369"/>
    </location>
</feature>
<feature type="binding site" evidence="1">
    <location>
        <position position="48"/>
    </location>
    <ligand>
        <name>NADP(+)</name>
        <dbReference type="ChEBI" id="CHEBI:58349"/>
    </ligand>
</feature>
<feature type="binding site" evidence="1">
    <location>
        <position position="54"/>
    </location>
    <ligand>
        <name>NADP(+)</name>
        <dbReference type="ChEBI" id="CHEBI:58349"/>
    </ligand>
</feature>
<feature type="binding site" evidence="1">
    <location>
        <begin position="125"/>
        <end position="127"/>
    </location>
    <ligand>
        <name>FMN</name>
        <dbReference type="ChEBI" id="CHEBI:58210"/>
    </ligand>
</feature>
<feature type="binding site" evidence="1">
    <location>
        <begin position="238"/>
        <end position="239"/>
    </location>
    <ligand>
        <name>FMN</name>
        <dbReference type="ChEBI" id="CHEBI:58210"/>
    </ligand>
</feature>
<feature type="binding site" evidence="1">
    <location>
        <position position="278"/>
    </location>
    <ligand>
        <name>FMN</name>
        <dbReference type="ChEBI" id="CHEBI:58210"/>
    </ligand>
</feature>
<feature type="binding site" evidence="1">
    <location>
        <begin position="293"/>
        <end position="297"/>
    </location>
    <ligand>
        <name>FMN</name>
        <dbReference type="ChEBI" id="CHEBI:58210"/>
    </ligand>
</feature>
<feature type="binding site" evidence="1">
    <location>
        <position position="319"/>
    </location>
    <ligand>
        <name>FMN</name>
        <dbReference type="ChEBI" id="CHEBI:58210"/>
    </ligand>
</feature>
<name>AROC_CUPNH</name>
<protein>
    <recommendedName>
        <fullName evidence="1">Chorismate synthase</fullName>
        <shortName evidence="1">CS</shortName>
        <ecNumber evidence="1">4.2.3.5</ecNumber>
    </recommendedName>
    <alternativeName>
        <fullName evidence="1">5-enolpyruvylshikimate-3-phosphate phospholyase</fullName>
    </alternativeName>
</protein>
<dbReference type="EC" id="4.2.3.5" evidence="1"/>
<dbReference type="EMBL" id="AM260479">
    <property type="protein sequence ID" value="CAJ92457.1"/>
    <property type="status" value="ALT_INIT"/>
    <property type="molecule type" value="Genomic_DNA"/>
</dbReference>
<dbReference type="RefSeq" id="WP_010813124.1">
    <property type="nucleotide sequence ID" value="NZ_CP039287.1"/>
</dbReference>
<dbReference type="SMR" id="Q0KC14"/>
<dbReference type="STRING" id="381666.H16_A1317"/>
<dbReference type="KEGG" id="reh:H16_A1317"/>
<dbReference type="eggNOG" id="COG0082">
    <property type="taxonomic scope" value="Bacteria"/>
</dbReference>
<dbReference type="HOGENOM" id="CLU_034547_0_2_4"/>
<dbReference type="OrthoDB" id="9771806at2"/>
<dbReference type="UniPathway" id="UPA00053">
    <property type="reaction ID" value="UER00090"/>
</dbReference>
<dbReference type="Proteomes" id="UP000008210">
    <property type="component" value="Chromosome 1"/>
</dbReference>
<dbReference type="GO" id="GO:0005829">
    <property type="term" value="C:cytosol"/>
    <property type="evidence" value="ECO:0007669"/>
    <property type="project" value="TreeGrafter"/>
</dbReference>
<dbReference type="GO" id="GO:0004107">
    <property type="term" value="F:chorismate synthase activity"/>
    <property type="evidence" value="ECO:0007669"/>
    <property type="project" value="UniProtKB-UniRule"/>
</dbReference>
<dbReference type="GO" id="GO:0010181">
    <property type="term" value="F:FMN binding"/>
    <property type="evidence" value="ECO:0007669"/>
    <property type="project" value="TreeGrafter"/>
</dbReference>
<dbReference type="GO" id="GO:0008652">
    <property type="term" value="P:amino acid biosynthetic process"/>
    <property type="evidence" value="ECO:0007669"/>
    <property type="project" value="UniProtKB-KW"/>
</dbReference>
<dbReference type="GO" id="GO:0009073">
    <property type="term" value="P:aromatic amino acid family biosynthetic process"/>
    <property type="evidence" value="ECO:0007669"/>
    <property type="project" value="UniProtKB-KW"/>
</dbReference>
<dbReference type="GO" id="GO:0009423">
    <property type="term" value="P:chorismate biosynthetic process"/>
    <property type="evidence" value="ECO:0007669"/>
    <property type="project" value="UniProtKB-UniRule"/>
</dbReference>
<dbReference type="CDD" id="cd07304">
    <property type="entry name" value="Chorismate_synthase"/>
    <property type="match status" value="1"/>
</dbReference>
<dbReference type="FunFam" id="3.60.150.10:FF:000001">
    <property type="entry name" value="Chorismate synthase"/>
    <property type="match status" value="1"/>
</dbReference>
<dbReference type="Gene3D" id="3.60.150.10">
    <property type="entry name" value="Chorismate synthase AroC"/>
    <property type="match status" value="1"/>
</dbReference>
<dbReference type="HAMAP" id="MF_00300">
    <property type="entry name" value="Chorismate_synth"/>
    <property type="match status" value="1"/>
</dbReference>
<dbReference type="InterPro" id="IPR000453">
    <property type="entry name" value="Chorismate_synth"/>
</dbReference>
<dbReference type="InterPro" id="IPR035904">
    <property type="entry name" value="Chorismate_synth_AroC_sf"/>
</dbReference>
<dbReference type="InterPro" id="IPR020541">
    <property type="entry name" value="Chorismate_synthase_CS"/>
</dbReference>
<dbReference type="NCBIfam" id="TIGR00033">
    <property type="entry name" value="aroC"/>
    <property type="match status" value="1"/>
</dbReference>
<dbReference type="NCBIfam" id="NF003793">
    <property type="entry name" value="PRK05382.1"/>
    <property type="match status" value="1"/>
</dbReference>
<dbReference type="PANTHER" id="PTHR21085">
    <property type="entry name" value="CHORISMATE SYNTHASE"/>
    <property type="match status" value="1"/>
</dbReference>
<dbReference type="PANTHER" id="PTHR21085:SF0">
    <property type="entry name" value="CHORISMATE SYNTHASE"/>
    <property type="match status" value="1"/>
</dbReference>
<dbReference type="Pfam" id="PF01264">
    <property type="entry name" value="Chorismate_synt"/>
    <property type="match status" value="1"/>
</dbReference>
<dbReference type="PIRSF" id="PIRSF001456">
    <property type="entry name" value="Chorismate_synth"/>
    <property type="match status" value="1"/>
</dbReference>
<dbReference type="SUPFAM" id="SSF103263">
    <property type="entry name" value="Chorismate synthase, AroC"/>
    <property type="match status" value="1"/>
</dbReference>
<dbReference type="PROSITE" id="PS00787">
    <property type="entry name" value="CHORISMATE_SYNTHASE_1"/>
    <property type="match status" value="1"/>
</dbReference>
<dbReference type="PROSITE" id="PS00788">
    <property type="entry name" value="CHORISMATE_SYNTHASE_2"/>
    <property type="match status" value="1"/>
</dbReference>
<dbReference type="PROSITE" id="PS00789">
    <property type="entry name" value="CHORISMATE_SYNTHASE_3"/>
    <property type="match status" value="1"/>
</dbReference>
<proteinExistence type="inferred from homology"/>
<accession>Q0KC14</accession>
<keyword id="KW-0028">Amino-acid biosynthesis</keyword>
<keyword id="KW-0057">Aromatic amino acid biosynthesis</keyword>
<keyword id="KW-0274">FAD</keyword>
<keyword id="KW-0285">Flavoprotein</keyword>
<keyword id="KW-0288">FMN</keyword>
<keyword id="KW-0456">Lyase</keyword>
<keyword id="KW-0521">NADP</keyword>
<keyword id="KW-1185">Reference proteome</keyword>
<gene>
    <name evidence="1" type="primary">aroC</name>
    <name type="ordered locus">H16_A1317</name>
</gene>
<sequence>MSGNTLGLLFTVTTFGESHGPAIGAVVDGCPPGMALTEADIQGDLDRRRPGTSRHVTQRQEPDQVEILSGVFEGKTTGTPICLLIRNTDQRSKDYGNIVETFRPGHADYTYWQKYGIRDHRGGGRSSARLTAPVVAAGAVAKKWLREKYGTEIRGYMSQLGEIAVPFTDWSHVPENPFFAPNADIIPELETYMDALRRDGDSVGARIEVVASNVPVGLGEPLFDRLDADIAHAMMGINAVKGVEIGAGFDSVAQRGSVHGDELTAEGFRTNNSGGVLGGISTGQDVTVSLAIKPTSSIRTPRESIDKAGNAATVETFGRHDPCVGIRATPIAEAMLALVLIDHALRHRAQCGDVKVDTPRIPAQAGQTP</sequence>